<reference key="1">
    <citation type="journal article" date="1989" name="Nihon Shokubutsu Byori Gakkaiho">
        <title>Comparative studies on the nucleotide sequence of cucumber mosaic virus RNA3 between Y strain and Q strain.</title>
        <authorList>
            <person name="Nitta N."/>
            <person name="Masuta C."/>
            <person name="Kuwata S."/>
            <person name="Takanami Y."/>
        </authorList>
    </citation>
    <scope>NUCLEOTIDE SEQUENCE [GENOMIC RNA]</scope>
</reference>
<reference key="2">
    <citation type="journal article" date="1997" name="J. Virol.">
        <title>Deletion of the C-terminal 33 amino acids of cucumber mosaic virus movement protein enables a chimeric brome mosaic virus to move from cell to cell.</title>
        <authorList>
            <person name="Nagano H."/>
            <person name="Okuno T."/>
            <person name="Mise K."/>
            <person name="Furusawa I."/>
        </authorList>
    </citation>
    <scope>NUCLEOTIDE SEQUENCE [GENOMIC RNA]</scope>
</reference>
<comment type="function">
    <text evidence="1">Transports viral genome to neighboring plant cells directly through plasmosdesmata, without any budding. The movement protein allows efficient cell to cell propagation, by bypassing the host cell wall barrier. Acts by forming a tubular structure at the host plasmodesmata, enlarging it enough to allow free passage of virion capsids (By similarity).</text>
</comment>
<comment type="subcellular location">
    <subcellularLocation>
        <location evidence="1">Host cell junction</location>
        <location evidence="1">Host plasmodesma</location>
    </subcellularLocation>
    <text evidence="1">Assembles into long tubular structures at the surface of the infected protoplast.</text>
</comment>
<comment type="similarity">
    <text evidence="3">Belongs to the cucumovirus movement protein family.</text>
</comment>
<protein>
    <recommendedName>
        <fullName>Movement protein</fullName>
        <shortName>MP</shortName>
    </recommendedName>
    <alternativeName>
        <fullName>Protein 3A</fullName>
    </alternativeName>
</protein>
<accession>P18028</accession>
<accession>P89528</accession>
<name>MVP_CMVY</name>
<evidence type="ECO:0000250" key="1"/>
<evidence type="ECO:0000256" key="2">
    <source>
        <dbReference type="SAM" id="MobiDB-lite"/>
    </source>
</evidence>
<evidence type="ECO:0000305" key="3"/>
<proteinExistence type="inferred from homology"/>
<gene>
    <name type="ORF">ORF3a</name>
</gene>
<sequence>MAFQGTSRTLTQQSSAATSDDLQKILFSPEAIKKMATECDLGRHHWMRADNAISVRPLVPEVTHGRIASFFKSGYDVGELCSKGYMSVPQVLCAVTRTVSTDAEGSLRIYLADLGDKELSPIDGQCVSLHNHDLPALVSFQPTYDCPMETVGNRKRCFAVVIERHGYIGYTGTTASVCSNWQARFSSKNNNYTHIAAGKTLVLPFNRLAEQTKPSAVARLLKSQLNNIESSQYLLTNAKINQNARSESEELNVESPPAAIGSSSASRSEAFRPQVVNGL</sequence>
<keyword id="KW-1031">Host cell junction</keyword>
<keyword id="KW-0813">Transport</keyword>
<keyword id="KW-0916">Viral movement protein</keyword>
<organismHost>
    <name type="scientific">Cucumis sativus</name>
    <name type="common">Cucumber</name>
    <dbReference type="NCBI Taxonomy" id="3659"/>
</organismHost>
<organismHost>
    <name type="scientific">Nicotiana tabacum</name>
    <name type="common">Common tobacco</name>
    <dbReference type="NCBI Taxonomy" id="4097"/>
</organismHost>
<organismHost>
    <name type="scientific">Solanum lycopersicum</name>
    <name type="common">Tomato</name>
    <name type="synonym">Lycopersicon esculentum</name>
    <dbReference type="NCBI Taxonomy" id="4081"/>
</organismHost>
<dbReference type="EMBL" id="M57602">
    <property type="protein sequence ID" value="AAA46419.1"/>
    <property type="molecule type" value="Genomic_RNA"/>
</dbReference>
<dbReference type="EMBL" id="D12499">
    <property type="protein sequence ID" value="BAA02060.1"/>
    <property type="molecule type" value="Genomic_RNA"/>
</dbReference>
<dbReference type="EMBL" id="D83958">
    <property type="protein sequence ID" value="BAA12151.1"/>
    <property type="molecule type" value="Genomic_RNA"/>
</dbReference>
<dbReference type="PIR" id="JA0096">
    <property type="entry name" value="P3VXY1"/>
</dbReference>
<dbReference type="GO" id="GO:0044219">
    <property type="term" value="C:host cell plasmodesma"/>
    <property type="evidence" value="ECO:0007669"/>
    <property type="project" value="UniProtKB-SubCell"/>
</dbReference>
<dbReference type="GO" id="GO:0046740">
    <property type="term" value="P:transport of virus in host, cell to cell"/>
    <property type="evidence" value="ECO:0007669"/>
    <property type="project" value="UniProtKB-KW"/>
</dbReference>
<dbReference type="InterPro" id="IPR000603">
    <property type="entry name" value="MPV"/>
</dbReference>
<dbReference type="Pfam" id="PF00803">
    <property type="entry name" value="3A"/>
    <property type="match status" value="1"/>
</dbReference>
<organism>
    <name type="scientific">Cucumber mosaic virus (strain Y)</name>
    <name type="common">CMV</name>
    <dbReference type="NCBI Taxonomy" id="12312"/>
    <lineage>
        <taxon>Viruses</taxon>
        <taxon>Riboviria</taxon>
        <taxon>Orthornavirae</taxon>
        <taxon>Kitrinoviricota</taxon>
        <taxon>Alsuviricetes</taxon>
        <taxon>Martellivirales</taxon>
        <taxon>Bromoviridae</taxon>
        <taxon>Cucumovirus</taxon>
        <taxon>Cucumber mosaic virus</taxon>
    </lineage>
</organism>
<feature type="chain" id="PRO_0000083250" description="Movement protein">
    <location>
        <begin position="1"/>
        <end position="279"/>
    </location>
</feature>
<feature type="region of interest" description="Disordered" evidence="2">
    <location>
        <begin position="246"/>
        <end position="279"/>
    </location>
</feature>
<feature type="compositionally biased region" description="Low complexity" evidence="2">
    <location>
        <begin position="254"/>
        <end position="268"/>
    </location>
</feature>
<feature type="sequence conflict" description="In Ref. 2; BAA12151." evidence="3" ref="2">
    <original>V</original>
    <variation>A</variation>
    <location>
        <position position="77"/>
    </location>
</feature>